<sequence length="150" mass="16951">MDSLDAEQLSALQKAFDSFDTDSKGFITPETVGVILRMMGVKISEKNLQEVISETDEDGSGELEFEEFVELAAKFLIEEDEEALKAELREAFRVYDRGGNGYITTDVLKEILRELDNRLTEEDLDSIIEEVDEDGSGTLDFNEFMQMMNG</sequence>
<proteinExistence type="evidence at protein level"/>
<comment type="function">
    <text>Troponin is the central regulatory protein of striated muscle contraction. Tn consists of three components: Tn-I which is the inhibitor of actomyosin ATPase, Tn-T which contains the binding site for tropomyosin and Tn-C. The binding of calcium to Tn-C abolishes the inhibitory action of Tn on actin filaments.</text>
</comment>
<comment type="miscellaneous">
    <text>There are three different troponin C in lobster.</text>
</comment>
<comment type="miscellaneous">
    <text>This protein binds two calcium ions.</text>
</comment>
<comment type="similarity">
    <text evidence="3">Belongs to the troponin C family.</text>
</comment>
<dbReference type="PIR" id="S18435">
    <property type="entry name" value="S18435"/>
</dbReference>
<dbReference type="SMR" id="P29291"/>
<dbReference type="Allergome" id="6090">
    <property type="allergen name" value="Hom a 6"/>
</dbReference>
<dbReference type="Allergome" id="6091">
    <property type="allergen name" value="Hom a 6.0101"/>
</dbReference>
<dbReference type="OrthoDB" id="26525at2759"/>
<dbReference type="GO" id="GO:0016460">
    <property type="term" value="C:myosin II complex"/>
    <property type="evidence" value="ECO:0007669"/>
    <property type="project" value="TreeGrafter"/>
</dbReference>
<dbReference type="GO" id="GO:0005509">
    <property type="term" value="F:calcium ion binding"/>
    <property type="evidence" value="ECO:0007669"/>
    <property type="project" value="InterPro"/>
</dbReference>
<dbReference type="CDD" id="cd00051">
    <property type="entry name" value="EFh"/>
    <property type="match status" value="2"/>
</dbReference>
<dbReference type="FunFam" id="1.10.238.10:FF:000103">
    <property type="entry name" value="Troponin C Ib"/>
    <property type="match status" value="1"/>
</dbReference>
<dbReference type="Gene3D" id="1.10.238.10">
    <property type="entry name" value="EF-hand"/>
    <property type="match status" value="2"/>
</dbReference>
<dbReference type="InterPro" id="IPR050230">
    <property type="entry name" value="CALM/Myosin/TropC-like"/>
</dbReference>
<dbReference type="InterPro" id="IPR011992">
    <property type="entry name" value="EF-hand-dom_pair"/>
</dbReference>
<dbReference type="InterPro" id="IPR018247">
    <property type="entry name" value="EF_Hand_1_Ca_BS"/>
</dbReference>
<dbReference type="InterPro" id="IPR002048">
    <property type="entry name" value="EF_hand_dom"/>
</dbReference>
<dbReference type="PANTHER" id="PTHR23048">
    <property type="entry name" value="MYOSIN LIGHT CHAIN 1, 3"/>
    <property type="match status" value="1"/>
</dbReference>
<dbReference type="PANTHER" id="PTHR23048:SF46">
    <property type="entry name" value="TROPONIN C-LIKE ISOFORM X1"/>
    <property type="match status" value="1"/>
</dbReference>
<dbReference type="Pfam" id="PF13499">
    <property type="entry name" value="EF-hand_7"/>
    <property type="match status" value="2"/>
</dbReference>
<dbReference type="SMART" id="SM00054">
    <property type="entry name" value="EFh"/>
    <property type="match status" value="4"/>
</dbReference>
<dbReference type="SUPFAM" id="SSF47473">
    <property type="entry name" value="EF-hand"/>
    <property type="match status" value="1"/>
</dbReference>
<dbReference type="PROSITE" id="PS00018">
    <property type="entry name" value="EF_HAND_1"/>
    <property type="match status" value="2"/>
</dbReference>
<dbReference type="PROSITE" id="PS50222">
    <property type="entry name" value="EF_HAND_2"/>
    <property type="match status" value="4"/>
</dbReference>
<organism>
    <name type="scientific">Homarus americanus</name>
    <name type="common">American lobster</name>
    <dbReference type="NCBI Taxonomy" id="6706"/>
    <lineage>
        <taxon>Eukaryota</taxon>
        <taxon>Metazoa</taxon>
        <taxon>Ecdysozoa</taxon>
        <taxon>Arthropoda</taxon>
        <taxon>Crustacea</taxon>
        <taxon>Multicrustacea</taxon>
        <taxon>Malacostraca</taxon>
        <taxon>Eumalacostraca</taxon>
        <taxon>Eucarida</taxon>
        <taxon>Decapoda</taxon>
        <taxon>Pleocyemata</taxon>
        <taxon>Astacidea</taxon>
        <taxon>Nephropoidea</taxon>
        <taxon>Nephropidae</taxon>
        <taxon>Homarus</taxon>
    </lineage>
</organism>
<protein>
    <recommendedName>
        <fullName>Troponin C, isoform 2B</fullName>
    </recommendedName>
</protein>
<name>TNNCB_HOMAM</name>
<accession>P29291</accession>
<evidence type="ECO:0000250" key="1"/>
<evidence type="ECO:0000255" key="2">
    <source>
        <dbReference type="PROSITE-ProRule" id="PRU00448"/>
    </source>
</evidence>
<evidence type="ECO:0000305" key="3"/>
<keyword id="KW-0007">Acetylation</keyword>
<keyword id="KW-0106">Calcium</keyword>
<keyword id="KW-0903">Direct protein sequencing</keyword>
<keyword id="KW-0479">Metal-binding</keyword>
<keyword id="KW-0514">Muscle protein</keyword>
<keyword id="KW-0677">Repeat</keyword>
<feature type="chain" id="PRO_0000073692" description="Troponin C, isoform 2B">
    <location>
        <begin position="1"/>
        <end position="150"/>
    </location>
</feature>
<feature type="domain" description="EF-hand 1" evidence="2">
    <location>
        <begin position="7"/>
        <end position="42"/>
    </location>
</feature>
<feature type="domain" description="EF-hand 2" evidence="2">
    <location>
        <begin position="43"/>
        <end position="78"/>
    </location>
</feature>
<feature type="domain" description="EF-hand 3" evidence="2">
    <location>
        <begin position="83"/>
        <end position="118"/>
    </location>
</feature>
<feature type="domain" description="EF-hand 4" evidence="2">
    <location>
        <begin position="119"/>
        <end position="150"/>
    </location>
</feature>
<feature type="binding site" evidence="2">
    <location>
        <position position="56"/>
    </location>
    <ligand>
        <name>Ca(2+)</name>
        <dbReference type="ChEBI" id="CHEBI:29108"/>
        <label>1</label>
    </ligand>
</feature>
<feature type="binding site" evidence="2">
    <location>
        <position position="58"/>
    </location>
    <ligand>
        <name>Ca(2+)</name>
        <dbReference type="ChEBI" id="CHEBI:29108"/>
        <label>1</label>
    </ligand>
</feature>
<feature type="binding site" evidence="2">
    <location>
        <position position="60"/>
    </location>
    <ligand>
        <name>Ca(2+)</name>
        <dbReference type="ChEBI" id="CHEBI:29108"/>
        <label>1</label>
    </ligand>
</feature>
<feature type="binding site" evidence="2">
    <location>
        <position position="62"/>
    </location>
    <ligand>
        <name>Ca(2+)</name>
        <dbReference type="ChEBI" id="CHEBI:29108"/>
        <label>1</label>
    </ligand>
</feature>
<feature type="binding site" evidence="2">
    <location>
        <position position="67"/>
    </location>
    <ligand>
        <name>Ca(2+)</name>
        <dbReference type="ChEBI" id="CHEBI:29108"/>
        <label>1</label>
    </ligand>
</feature>
<feature type="binding site" evidence="2">
    <location>
        <position position="132"/>
    </location>
    <ligand>
        <name>Ca(2+)</name>
        <dbReference type="ChEBI" id="CHEBI:29108"/>
        <label>2</label>
    </ligand>
</feature>
<feature type="binding site" evidence="2">
    <location>
        <position position="134"/>
    </location>
    <ligand>
        <name>Ca(2+)</name>
        <dbReference type="ChEBI" id="CHEBI:29108"/>
        <label>2</label>
    </ligand>
</feature>
<feature type="binding site" evidence="2">
    <location>
        <position position="136"/>
    </location>
    <ligand>
        <name>Ca(2+)</name>
        <dbReference type="ChEBI" id="CHEBI:29108"/>
        <label>2</label>
    </ligand>
</feature>
<feature type="binding site" evidence="2">
    <location>
        <position position="138"/>
    </location>
    <ligand>
        <name>Ca(2+)</name>
        <dbReference type="ChEBI" id="CHEBI:29108"/>
        <label>2</label>
    </ligand>
</feature>
<feature type="binding site" evidence="2">
    <location>
        <position position="143"/>
    </location>
    <ligand>
        <name>Ca(2+)</name>
        <dbReference type="ChEBI" id="CHEBI:29108"/>
        <label>2</label>
    </ligand>
</feature>
<feature type="modified residue" description="N-acetylmethionine" evidence="1">
    <location>
        <position position="1"/>
    </location>
</feature>
<reference key="1">
    <citation type="journal article" date="1991" name="Arch. Biochem. Biophys.">
        <title>Lobster troponin C: amino acid sequences of three isoforms.</title>
        <authorList>
            <person name="Garone L."/>
            <person name="Theibert J.L."/>
            <person name="Miegel A."/>
            <person name="Maeda Y."/>
            <person name="Murphy C."/>
            <person name="Collins J.H."/>
        </authorList>
    </citation>
    <scope>PROTEIN SEQUENCE</scope>
    <source>
        <tissue>Abdominal flexor muscle</tissue>
    </source>
</reference>